<reference key="1">
    <citation type="journal article" date="2004" name="Environ. Microbiol.">
        <title>The genome of Desulfotalea psychrophila, a sulfate-reducing bacterium from permanently cold Arctic sediments.</title>
        <authorList>
            <person name="Rabus R."/>
            <person name="Ruepp A."/>
            <person name="Frickey T."/>
            <person name="Rattei T."/>
            <person name="Fartmann B."/>
            <person name="Stark M."/>
            <person name="Bauer M."/>
            <person name="Zibat A."/>
            <person name="Lombardot T."/>
            <person name="Becker I."/>
            <person name="Amann J."/>
            <person name="Gellner K."/>
            <person name="Teeling H."/>
            <person name="Leuschner W.D."/>
            <person name="Gloeckner F.-O."/>
            <person name="Lupas A.N."/>
            <person name="Amann R."/>
            <person name="Klenk H.-P."/>
        </authorList>
    </citation>
    <scope>NUCLEOTIDE SEQUENCE [LARGE SCALE GENOMIC DNA]</scope>
    <source>
        <strain>DSM 12343 / LSv54</strain>
    </source>
</reference>
<gene>
    <name evidence="1" type="primary">def</name>
    <name type="ordered locus">DP0746</name>
</gene>
<comment type="function">
    <text evidence="1">Removes the formyl group from the N-terminal Met of newly synthesized proteins. Requires at least a dipeptide for an efficient rate of reaction. N-terminal L-methionine is a prerequisite for activity but the enzyme has broad specificity at other positions.</text>
</comment>
<comment type="catalytic activity">
    <reaction evidence="1">
        <text>N-terminal N-formyl-L-methionyl-[peptide] + H2O = N-terminal L-methionyl-[peptide] + formate</text>
        <dbReference type="Rhea" id="RHEA:24420"/>
        <dbReference type="Rhea" id="RHEA-COMP:10639"/>
        <dbReference type="Rhea" id="RHEA-COMP:10640"/>
        <dbReference type="ChEBI" id="CHEBI:15377"/>
        <dbReference type="ChEBI" id="CHEBI:15740"/>
        <dbReference type="ChEBI" id="CHEBI:49298"/>
        <dbReference type="ChEBI" id="CHEBI:64731"/>
        <dbReference type="EC" id="3.5.1.88"/>
    </reaction>
</comment>
<comment type="cofactor">
    <cofactor evidence="1">
        <name>Fe(2+)</name>
        <dbReference type="ChEBI" id="CHEBI:29033"/>
    </cofactor>
    <text evidence="1">Binds 1 Fe(2+) ion.</text>
</comment>
<comment type="similarity">
    <text evidence="1">Belongs to the polypeptide deformylase family.</text>
</comment>
<name>DEF_DESPS</name>
<feature type="chain" id="PRO_0000301026" description="Peptide deformylase">
    <location>
        <begin position="1"/>
        <end position="169"/>
    </location>
</feature>
<feature type="active site" evidence="1">
    <location>
        <position position="137"/>
    </location>
</feature>
<feature type="binding site" evidence="1">
    <location>
        <position position="94"/>
    </location>
    <ligand>
        <name>Fe cation</name>
        <dbReference type="ChEBI" id="CHEBI:24875"/>
    </ligand>
</feature>
<feature type="binding site" evidence="1">
    <location>
        <position position="136"/>
    </location>
    <ligand>
        <name>Fe cation</name>
        <dbReference type="ChEBI" id="CHEBI:24875"/>
    </ligand>
</feature>
<feature type="binding site" evidence="1">
    <location>
        <position position="140"/>
    </location>
    <ligand>
        <name>Fe cation</name>
        <dbReference type="ChEBI" id="CHEBI:24875"/>
    </ligand>
</feature>
<evidence type="ECO:0000255" key="1">
    <source>
        <dbReference type="HAMAP-Rule" id="MF_00163"/>
    </source>
</evidence>
<accession>Q6AQ98</accession>
<keyword id="KW-0378">Hydrolase</keyword>
<keyword id="KW-0408">Iron</keyword>
<keyword id="KW-0479">Metal-binding</keyword>
<keyword id="KW-0648">Protein biosynthesis</keyword>
<keyword id="KW-1185">Reference proteome</keyword>
<dbReference type="EC" id="3.5.1.88" evidence="1"/>
<dbReference type="EMBL" id="CR522870">
    <property type="protein sequence ID" value="CAG35475.1"/>
    <property type="molecule type" value="Genomic_DNA"/>
</dbReference>
<dbReference type="RefSeq" id="WP_011187991.1">
    <property type="nucleotide sequence ID" value="NC_006138.1"/>
</dbReference>
<dbReference type="SMR" id="Q6AQ98"/>
<dbReference type="STRING" id="177439.DP0746"/>
<dbReference type="KEGG" id="dps:DP0746"/>
<dbReference type="eggNOG" id="COG0242">
    <property type="taxonomic scope" value="Bacteria"/>
</dbReference>
<dbReference type="HOGENOM" id="CLU_061901_2_1_7"/>
<dbReference type="OrthoDB" id="9804313at2"/>
<dbReference type="Proteomes" id="UP000000602">
    <property type="component" value="Chromosome"/>
</dbReference>
<dbReference type="GO" id="GO:0046872">
    <property type="term" value="F:metal ion binding"/>
    <property type="evidence" value="ECO:0007669"/>
    <property type="project" value="UniProtKB-KW"/>
</dbReference>
<dbReference type="GO" id="GO:0042586">
    <property type="term" value="F:peptide deformylase activity"/>
    <property type="evidence" value="ECO:0007669"/>
    <property type="project" value="UniProtKB-UniRule"/>
</dbReference>
<dbReference type="GO" id="GO:0043686">
    <property type="term" value="P:co-translational protein modification"/>
    <property type="evidence" value="ECO:0007669"/>
    <property type="project" value="TreeGrafter"/>
</dbReference>
<dbReference type="GO" id="GO:0006412">
    <property type="term" value="P:translation"/>
    <property type="evidence" value="ECO:0007669"/>
    <property type="project" value="UniProtKB-UniRule"/>
</dbReference>
<dbReference type="CDD" id="cd00487">
    <property type="entry name" value="Pep_deformylase"/>
    <property type="match status" value="1"/>
</dbReference>
<dbReference type="Gene3D" id="3.90.45.10">
    <property type="entry name" value="Peptide deformylase"/>
    <property type="match status" value="1"/>
</dbReference>
<dbReference type="HAMAP" id="MF_00163">
    <property type="entry name" value="Pep_deformylase"/>
    <property type="match status" value="1"/>
</dbReference>
<dbReference type="InterPro" id="IPR023635">
    <property type="entry name" value="Peptide_deformylase"/>
</dbReference>
<dbReference type="InterPro" id="IPR036821">
    <property type="entry name" value="Peptide_deformylase_sf"/>
</dbReference>
<dbReference type="NCBIfam" id="TIGR00079">
    <property type="entry name" value="pept_deformyl"/>
    <property type="match status" value="1"/>
</dbReference>
<dbReference type="NCBIfam" id="NF001159">
    <property type="entry name" value="PRK00150.1-3"/>
    <property type="match status" value="1"/>
</dbReference>
<dbReference type="PANTHER" id="PTHR10458">
    <property type="entry name" value="PEPTIDE DEFORMYLASE"/>
    <property type="match status" value="1"/>
</dbReference>
<dbReference type="PANTHER" id="PTHR10458:SF22">
    <property type="entry name" value="PEPTIDE DEFORMYLASE"/>
    <property type="match status" value="1"/>
</dbReference>
<dbReference type="Pfam" id="PF01327">
    <property type="entry name" value="Pep_deformylase"/>
    <property type="match status" value="1"/>
</dbReference>
<dbReference type="PIRSF" id="PIRSF004749">
    <property type="entry name" value="Pep_def"/>
    <property type="match status" value="1"/>
</dbReference>
<dbReference type="PRINTS" id="PR01576">
    <property type="entry name" value="PDEFORMYLASE"/>
</dbReference>
<dbReference type="SUPFAM" id="SSF56420">
    <property type="entry name" value="Peptide deformylase"/>
    <property type="match status" value="1"/>
</dbReference>
<organism>
    <name type="scientific">Desulfotalea psychrophila (strain LSv54 / DSM 12343)</name>
    <dbReference type="NCBI Taxonomy" id="177439"/>
    <lineage>
        <taxon>Bacteria</taxon>
        <taxon>Pseudomonadati</taxon>
        <taxon>Thermodesulfobacteriota</taxon>
        <taxon>Desulfobulbia</taxon>
        <taxon>Desulfobulbales</taxon>
        <taxon>Desulfocapsaceae</taxon>
        <taxon>Desulfotalea</taxon>
    </lineage>
</organism>
<sequence>MAILKICTYPDPVLRKETVAITVFDEKLVKLTEDMAETMYDAPGIGLAAPQIGESLKLVVVSTARREDSKQEYMVMANPEIVEKEESQVDEEGCLSVPELLAMVKRYRKIKVNYQDINGEPCSMTVEDRFAVVLQHEIDHLNGILFLDHLSSLKRNLYKKKVKKWFLPR</sequence>
<protein>
    <recommendedName>
        <fullName evidence="1">Peptide deformylase</fullName>
        <shortName evidence="1">PDF</shortName>
        <ecNumber evidence="1">3.5.1.88</ecNumber>
    </recommendedName>
    <alternativeName>
        <fullName evidence="1">Polypeptide deformylase</fullName>
    </alternativeName>
</protein>
<proteinExistence type="inferred from homology"/>